<comment type="function">
    <text evidence="2">Part of the tripartite efflux system MdtEF-TolC, which confers resistance to compounds such as rhodamine 6G, erythromycin, doxorubicin, ethidium bromide, TPP, SDS, deoxycholate, crystal violet and benzalkonium.</text>
</comment>
<comment type="subunit">
    <text evidence="3 7">Homotrimer. Part of the tripartite efflux system MdtEF-TolC, which is composed of an inner membrane transporter, MdtF, a membrane fusion protein, MdtE, and an outer membrane component, TolC. The complex forms a large protein conduit and can translocate molecules across both the inner and outer membranes.</text>
</comment>
<comment type="subcellular location">
    <subcellularLocation>
        <location evidence="8">Cell inner membrane</location>
        <topology evidence="1">Lipid-anchor</topology>
    </subcellularLocation>
</comment>
<comment type="induction">
    <text evidence="3 4 5 6">Induced by EvgA, probably via YdeO.</text>
</comment>
<comment type="similarity">
    <text evidence="8">Belongs to the membrane fusion protein (MFP) (TC 8.A.1) family.</text>
</comment>
<evidence type="ECO:0000255" key="1">
    <source>
        <dbReference type="PROSITE-ProRule" id="PRU00303"/>
    </source>
</evidence>
<evidence type="ECO:0000269" key="2">
    <source>
    </source>
</evidence>
<evidence type="ECO:0000269" key="3">
    <source>
    </source>
</evidence>
<evidence type="ECO:0000269" key="4">
    <source>
    </source>
</evidence>
<evidence type="ECO:0000269" key="5">
    <source>
    </source>
</evidence>
<evidence type="ECO:0000269" key="6">
    <source>
    </source>
</evidence>
<evidence type="ECO:0000269" key="7">
    <source>
    </source>
</evidence>
<evidence type="ECO:0000305" key="8"/>
<name>MDTE_ECOLI</name>
<protein>
    <recommendedName>
        <fullName>Multidrug resistance protein MdtE</fullName>
    </recommendedName>
</protein>
<dbReference type="EMBL" id="U00039">
    <property type="protein sequence ID" value="AAB18489.1"/>
    <property type="molecule type" value="Genomic_DNA"/>
</dbReference>
<dbReference type="EMBL" id="U00096">
    <property type="protein sequence ID" value="AAC76538.1"/>
    <property type="molecule type" value="Genomic_DNA"/>
</dbReference>
<dbReference type="EMBL" id="AP009048">
    <property type="protein sequence ID" value="BAE77781.1"/>
    <property type="molecule type" value="Genomic_DNA"/>
</dbReference>
<dbReference type="PIR" id="S47733">
    <property type="entry name" value="S47733"/>
</dbReference>
<dbReference type="RefSeq" id="NP_417970.1">
    <property type="nucleotide sequence ID" value="NC_000913.3"/>
</dbReference>
<dbReference type="SMR" id="P37636"/>
<dbReference type="BioGRID" id="4262520">
    <property type="interactions" value="227"/>
</dbReference>
<dbReference type="BioGRID" id="852339">
    <property type="interactions" value="3"/>
</dbReference>
<dbReference type="FunCoup" id="P37636">
    <property type="interactions" value="523"/>
</dbReference>
<dbReference type="IntAct" id="P37636">
    <property type="interactions" value="4"/>
</dbReference>
<dbReference type="STRING" id="511145.b3513"/>
<dbReference type="CARD" id="ARO:3000795">
    <property type="molecule name" value="mdtE"/>
    <property type="mechanism identifier" value="ARO:0010000"/>
    <property type="mechanism name" value="antibiotic efflux"/>
</dbReference>
<dbReference type="TCDB" id="8.A.1.6.3">
    <property type="family name" value="the membrane fusion protein (mfp) family"/>
</dbReference>
<dbReference type="jPOST" id="P37636"/>
<dbReference type="PaxDb" id="511145-b3513"/>
<dbReference type="EnsemblBacteria" id="AAC76538">
    <property type="protein sequence ID" value="AAC76538"/>
    <property type="gene ID" value="b3513"/>
</dbReference>
<dbReference type="GeneID" id="948031"/>
<dbReference type="KEGG" id="ecj:JW3481"/>
<dbReference type="KEGG" id="eco:b3513"/>
<dbReference type="KEGG" id="ecoc:C3026_19035"/>
<dbReference type="PATRIC" id="fig|1411691.4.peg.3205"/>
<dbReference type="EchoBASE" id="EB2151"/>
<dbReference type="eggNOG" id="COG0845">
    <property type="taxonomic scope" value="Bacteria"/>
</dbReference>
<dbReference type="HOGENOM" id="CLU_018816_2_1_6"/>
<dbReference type="InParanoid" id="P37636"/>
<dbReference type="OMA" id="ENATRMQ"/>
<dbReference type="OrthoDB" id="9800613at2"/>
<dbReference type="PhylomeDB" id="P37636"/>
<dbReference type="BioCyc" id="EcoCyc:EG12240-MONOMER"/>
<dbReference type="BioCyc" id="MetaCyc:EG12240-MONOMER"/>
<dbReference type="PRO" id="PR:P37636"/>
<dbReference type="Proteomes" id="UP000000625">
    <property type="component" value="Chromosome"/>
</dbReference>
<dbReference type="GO" id="GO:0005886">
    <property type="term" value="C:plasma membrane"/>
    <property type="evidence" value="ECO:0000314"/>
    <property type="project" value="EcoCyc"/>
</dbReference>
<dbReference type="GO" id="GO:0015125">
    <property type="term" value="F:bile acid transmembrane transporter activity"/>
    <property type="evidence" value="ECO:0000315"/>
    <property type="project" value="EcoCyc"/>
</dbReference>
<dbReference type="GO" id="GO:0042802">
    <property type="term" value="F:identical protein binding"/>
    <property type="evidence" value="ECO:0000314"/>
    <property type="project" value="EcoCyc"/>
</dbReference>
<dbReference type="GO" id="GO:0015721">
    <property type="term" value="P:bile acid and bile salt transport"/>
    <property type="evidence" value="ECO:0000315"/>
    <property type="project" value="EcoCyc"/>
</dbReference>
<dbReference type="GO" id="GO:0046677">
    <property type="term" value="P:response to antibiotic"/>
    <property type="evidence" value="ECO:0000315"/>
    <property type="project" value="EcoCyc"/>
</dbReference>
<dbReference type="GO" id="GO:0009636">
    <property type="term" value="P:response to toxic substance"/>
    <property type="evidence" value="ECO:0000315"/>
    <property type="project" value="EcoCyc"/>
</dbReference>
<dbReference type="GO" id="GO:0042908">
    <property type="term" value="P:xenobiotic transport"/>
    <property type="evidence" value="ECO:0000315"/>
    <property type="project" value="EcoCyc"/>
</dbReference>
<dbReference type="FunFam" id="2.40.420.20:FF:000001">
    <property type="entry name" value="Efflux RND transporter periplasmic adaptor subunit"/>
    <property type="match status" value="1"/>
</dbReference>
<dbReference type="FunFam" id="2.40.30.170:FF:000001">
    <property type="entry name" value="Multidrug resistance efflux transporter MdtE"/>
    <property type="match status" value="1"/>
</dbReference>
<dbReference type="Gene3D" id="2.40.30.170">
    <property type="match status" value="1"/>
</dbReference>
<dbReference type="Gene3D" id="2.40.420.20">
    <property type="match status" value="1"/>
</dbReference>
<dbReference type="Gene3D" id="2.40.50.100">
    <property type="match status" value="1"/>
</dbReference>
<dbReference type="Gene3D" id="1.10.287.470">
    <property type="entry name" value="Helix hairpin bin"/>
    <property type="match status" value="1"/>
</dbReference>
<dbReference type="InterPro" id="IPR043602">
    <property type="entry name" value="CusB-like_dom_1"/>
</dbReference>
<dbReference type="InterPro" id="IPR032317">
    <property type="entry name" value="CusB_D23"/>
</dbReference>
<dbReference type="InterPro" id="IPR051160">
    <property type="entry name" value="MFP_Efflux"/>
</dbReference>
<dbReference type="InterPro" id="IPR006143">
    <property type="entry name" value="RND_pump_MFP"/>
</dbReference>
<dbReference type="NCBIfam" id="NF007362">
    <property type="entry name" value="PRK09859.1"/>
    <property type="match status" value="1"/>
</dbReference>
<dbReference type="NCBIfam" id="TIGR01730">
    <property type="entry name" value="RND_mfp"/>
    <property type="match status" value="1"/>
</dbReference>
<dbReference type="PANTHER" id="PTHR30158">
    <property type="entry name" value="ACRA/E-RELATED COMPONENT OF DRUG EFFLUX TRANSPORTER"/>
    <property type="match status" value="1"/>
</dbReference>
<dbReference type="PANTHER" id="PTHR30158:SF3">
    <property type="entry name" value="MULTIDRUG EFFLUX PUMP SUBUNIT ACRA-RELATED"/>
    <property type="match status" value="1"/>
</dbReference>
<dbReference type="Pfam" id="PF00529">
    <property type="entry name" value="CusB_dom_1"/>
    <property type="match status" value="1"/>
</dbReference>
<dbReference type="Pfam" id="PF16576">
    <property type="entry name" value="HlyD_D23"/>
    <property type="match status" value="1"/>
</dbReference>
<dbReference type="SUPFAM" id="SSF111369">
    <property type="entry name" value="HlyD-like secretion proteins"/>
    <property type="match status" value="1"/>
</dbReference>
<dbReference type="PROSITE" id="PS51257">
    <property type="entry name" value="PROKAR_LIPOPROTEIN"/>
    <property type="match status" value="1"/>
</dbReference>
<sequence>MNRRRKLLIPLLFCGAMLTACDDKSAENAAAMTPEVGVVTLSPGSVNVLSELPGRTVPYEVAEIRPQVGGIIIKRNFIEGDKVNQGDSLYQIDPAPLQAELNSAKGSLAKALSTASNARITFNRQASLLKTNYVSRQDYDTARTQLNEAEANVTVAKAAVEQATINLQYANVTSPITGVSGKSSVTVGALVTANQADSLVTVQRLDPIYVDLTQSVQDFLRMKEEVASGQIKQVQGSTPVQLNLENGKRYSQTGTLKFSDPTVDETTGSVTLRAIFPNPNGDLLPGMYVTALVDEGSRQNVLLVPQEGVTHNAQGKATALILDKDDVVQLREIEASKAIGDQWVVTSGLQAGDRVIVSGLQRIRPGIKARAISSSQENASTESKQ</sequence>
<accession>P37636</accession>
<accession>Q2M7H5</accession>
<keyword id="KW-0046">Antibiotic resistance</keyword>
<keyword id="KW-0997">Cell inner membrane</keyword>
<keyword id="KW-1003">Cell membrane</keyword>
<keyword id="KW-0449">Lipoprotein</keyword>
<keyword id="KW-0472">Membrane</keyword>
<keyword id="KW-0564">Palmitate</keyword>
<keyword id="KW-1185">Reference proteome</keyword>
<keyword id="KW-0732">Signal</keyword>
<keyword id="KW-0813">Transport</keyword>
<gene>
    <name type="primary">mdtE</name>
    <name type="synonym">yhiU</name>
    <name type="ordered locus">b3513</name>
    <name type="ordered locus">JW3481</name>
</gene>
<organism>
    <name type="scientific">Escherichia coli (strain K12)</name>
    <dbReference type="NCBI Taxonomy" id="83333"/>
    <lineage>
        <taxon>Bacteria</taxon>
        <taxon>Pseudomonadati</taxon>
        <taxon>Pseudomonadota</taxon>
        <taxon>Gammaproteobacteria</taxon>
        <taxon>Enterobacterales</taxon>
        <taxon>Enterobacteriaceae</taxon>
        <taxon>Escherichia</taxon>
    </lineage>
</organism>
<reference key="1">
    <citation type="journal article" date="1994" name="Nucleic Acids Res.">
        <title>Analysis of the Escherichia coli genome. V. DNA sequence of the region from 76.0 to 81.5 minutes.</title>
        <authorList>
            <person name="Sofia H.J."/>
            <person name="Burland V."/>
            <person name="Daniels D.L."/>
            <person name="Plunkett G. III"/>
            <person name="Blattner F.R."/>
        </authorList>
    </citation>
    <scope>NUCLEOTIDE SEQUENCE [LARGE SCALE GENOMIC DNA]</scope>
    <source>
        <strain>K12 / MG1655 / ATCC 47076</strain>
    </source>
</reference>
<reference key="2">
    <citation type="journal article" date="1997" name="Science">
        <title>The complete genome sequence of Escherichia coli K-12.</title>
        <authorList>
            <person name="Blattner F.R."/>
            <person name="Plunkett G. III"/>
            <person name="Bloch C.A."/>
            <person name="Perna N.T."/>
            <person name="Burland V."/>
            <person name="Riley M."/>
            <person name="Collado-Vides J."/>
            <person name="Glasner J.D."/>
            <person name="Rode C.K."/>
            <person name="Mayhew G.F."/>
            <person name="Gregor J."/>
            <person name="Davis N.W."/>
            <person name="Kirkpatrick H.A."/>
            <person name="Goeden M.A."/>
            <person name="Rose D.J."/>
            <person name="Mau B."/>
            <person name="Shao Y."/>
        </authorList>
    </citation>
    <scope>NUCLEOTIDE SEQUENCE [LARGE SCALE GENOMIC DNA]</scope>
    <source>
        <strain>K12 / MG1655 / ATCC 47076</strain>
    </source>
</reference>
<reference key="3">
    <citation type="journal article" date="2006" name="Mol. Syst. Biol.">
        <title>Highly accurate genome sequences of Escherichia coli K-12 strains MG1655 and W3110.</title>
        <authorList>
            <person name="Hayashi K."/>
            <person name="Morooka N."/>
            <person name="Yamamoto Y."/>
            <person name="Fujita K."/>
            <person name="Isono K."/>
            <person name="Choi S."/>
            <person name="Ohtsubo E."/>
            <person name="Baba T."/>
            <person name="Wanner B.L."/>
            <person name="Mori H."/>
            <person name="Horiuchi T."/>
        </authorList>
    </citation>
    <scope>NUCLEOTIDE SEQUENCE [LARGE SCALE GENOMIC DNA]</scope>
    <source>
        <strain>K12 / W3110 / ATCC 27325 / DSM 5911</strain>
    </source>
</reference>
<reference key="4">
    <citation type="journal article" date="2001" name="J. Bacteriol.">
        <title>Analysis of a complete library of putative drug transporter genes in Escherichia coli.</title>
        <authorList>
            <person name="Nishino K."/>
            <person name="Yamaguchi A."/>
        </authorList>
    </citation>
    <scope>FUNCTION IN MULTIDRUG RESISTANCE</scope>
</reference>
<reference key="5">
    <citation type="journal article" date="2002" name="J. Bacteriol.">
        <title>EvgA of the two-component signal transduction system modulates production of the yhiUV multidrug transporter in Escherichia coli.</title>
        <authorList>
            <person name="Nishino K."/>
            <person name="Yamaguchi A."/>
        </authorList>
    </citation>
    <scope>INDUCTION</scope>
    <scope>SUBUNIT</scope>
</reference>
<reference key="6">
    <citation type="journal article" date="2002" name="J. Bacteriol.">
        <title>Escherichia coli gene expression responsive to levels of the response regulator EvgA.</title>
        <authorList>
            <person name="Masuda N."/>
            <person name="Church G.M."/>
        </authorList>
    </citation>
    <scope>INDUCTION</scope>
    <source>
        <strain>K12 / MG1655 / ATCC 47076</strain>
    </source>
</reference>
<reference key="7">
    <citation type="journal article" date="2003" name="Microbiology">
        <title>Transcriptional regulation of drug efflux genes by EvgAS, a two-component system in Escherichia coli.</title>
        <authorList>
            <person name="Eguchi Y."/>
            <person name="Oshima T."/>
            <person name="Mori H."/>
            <person name="Aono R."/>
            <person name="Yamamoto K."/>
            <person name="Ishihama A."/>
            <person name="Utsumi R."/>
        </authorList>
    </citation>
    <scope>INDUCTION</scope>
</reference>
<reference key="8">
    <citation type="journal article" date="2003" name="Mol. Microbiol.">
        <title>Regulatory network of acid resistance genes in Escherichia coli.</title>
        <authorList>
            <person name="Masuda N."/>
            <person name="Church G.M."/>
        </authorList>
    </citation>
    <scope>INDUCTION</scope>
    <source>
        <strain>K12 / MG1655 / ATCC 47076</strain>
    </source>
</reference>
<reference key="9">
    <citation type="journal article" date="2005" name="J. Biol. Chem.">
        <title>Protein complexes of the Escherichia coli cell envelope.</title>
        <authorList>
            <person name="Stenberg F."/>
            <person name="Chovanec P."/>
            <person name="Maslen S.L."/>
            <person name="Robinson C.V."/>
            <person name="Ilag L."/>
            <person name="von Heijne G."/>
            <person name="Daley D.O."/>
        </authorList>
    </citation>
    <scope>SUBUNIT</scope>
    <scope>SUBCELLULAR LOCATION</scope>
    <source>
        <strain>BL21-DE3</strain>
    </source>
</reference>
<proteinExistence type="evidence at protein level"/>
<feature type="signal peptide" evidence="1">
    <location>
        <begin position="1"/>
        <end position="20"/>
    </location>
</feature>
<feature type="chain" id="PRO_0000018708" description="Multidrug resistance protein MdtE">
    <location>
        <begin position="21"/>
        <end position="385"/>
    </location>
</feature>
<feature type="lipid moiety-binding region" description="N-palmitoyl cysteine" evidence="1">
    <location>
        <position position="21"/>
    </location>
</feature>
<feature type="lipid moiety-binding region" description="S-diacylglycerol cysteine" evidence="1">
    <location>
        <position position="21"/>
    </location>
</feature>